<organism>
    <name type="scientific">Urodacus yaschenkoi</name>
    <name type="common">Inland robust scorpion</name>
    <dbReference type="NCBI Taxonomy" id="1273102"/>
    <lineage>
        <taxon>Eukaryota</taxon>
        <taxon>Metazoa</taxon>
        <taxon>Ecdysozoa</taxon>
        <taxon>Arthropoda</taxon>
        <taxon>Chelicerata</taxon>
        <taxon>Arachnida</taxon>
        <taxon>Scorpiones</taxon>
        <taxon>Iurida</taxon>
        <taxon>Scorpionoidea</taxon>
        <taxon>Scorpionidae</taxon>
        <taxon>Urodacinae</taxon>
        <taxon>Urodacus</taxon>
    </lineage>
</organism>
<sequence>MKNQFVLLLLAIVFLQMIFQSDAILSAIWSGIKSLFGKRGLENMDKFDELFDGDLSEADLDFLKELMR</sequence>
<accession>L0GCI6</accession>
<evidence type="ECO:0000250" key="1"/>
<evidence type="ECO:0000255" key="2"/>
<evidence type="ECO:0000269" key="3">
    <source>
    </source>
</evidence>
<evidence type="ECO:0000303" key="4">
    <source>
    </source>
</evidence>
<evidence type="ECO:0000303" key="5">
    <source>
    </source>
</evidence>
<evidence type="ECO:0000303" key="6">
    <source>
    </source>
</evidence>
<evidence type="ECO:0000305" key="7"/>
<protein>
    <recommendedName>
        <fullName evidence="4">Antimicrobial peptide UyCT3</fullName>
        <shortName evidence="4">CT3</shortName>
    </recommendedName>
    <alternativeName>
        <fullName evidence="6">Non-disulfide-bridged peptide 4.17</fullName>
        <shortName evidence="6">NDBP-4.17</shortName>
    </alternativeName>
    <alternativeName>
        <fullName evidence="5">Non-disulfide-bridged peptide 5.15</fullName>
        <shortName evidence="5">NDBP-5.15</shortName>
    </alternativeName>
</protein>
<proteinExistence type="evidence at protein level"/>
<keyword id="KW-0027">Amidation</keyword>
<keyword id="KW-0044">Antibiotic</keyword>
<keyword id="KW-0929">Antimicrobial</keyword>
<keyword id="KW-0165">Cleavage on pair of basic residues</keyword>
<keyword id="KW-0204">Cytolysis</keyword>
<keyword id="KW-0354">Hemolysis</keyword>
<keyword id="KW-0472">Membrane</keyword>
<keyword id="KW-0964">Secreted</keyword>
<keyword id="KW-0732">Signal</keyword>
<keyword id="KW-1052">Target cell membrane</keyword>
<keyword id="KW-1053">Target membrane</keyword>
<keyword id="KW-0812">Transmembrane</keyword>
<name>NDB4H_UROYA</name>
<feature type="signal peptide" evidence="2">
    <location>
        <begin position="1"/>
        <end position="23"/>
    </location>
</feature>
<feature type="peptide" id="PRO_5001091941" description="Antimicrobial peptide UyCT3">
    <location>
        <begin position="24"/>
        <end position="36"/>
    </location>
</feature>
<feature type="propeptide" id="PRO_5001091942" evidence="2">
    <location>
        <begin position="40"/>
        <end position="68"/>
    </location>
</feature>
<feature type="modified residue" description="Phenylalanine amide" evidence="3">
    <location>
        <position position="36"/>
    </location>
</feature>
<dbReference type="EMBL" id="JX274241">
    <property type="protein sequence ID" value="AGA82755.1"/>
    <property type="molecule type" value="mRNA"/>
</dbReference>
<dbReference type="SMR" id="L0GCI6"/>
<dbReference type="GO" id="GO:0005576">
    <property type="term" value="C:extracellular region"/>
    <property type="evidence" value="ECO:0007669"/>
    <property type="project" value="UniProtKB-SubCell"/>
</dbReference>
<dbReference type="GO" id="GO:0016020">
    <property type="term" value="C:membrane"/>
    <property type="evidence" value="ECO:0007669"/>
    <property type="project" value="UniProtKB-KW"/>
</dbReference>
<dbReference type="GO" id="GO:0044218">
    <property type="term" value="C:other organism cell membrane"/>
    <property type="evidence" value="ECO:0007669"/>
    <property type="project" value="UniProtKB-KW"/>
</dbReference>
<dbReference type="GO" id="GO:0042742">
    <property type="term" value="P:defense response to bacterium"/>
    <property type="evidence" value="ECO:0007669"/>
    <property type="project" value="UniProtKB-KW"/>
</dbReference>
<dbReference type="GO" id="GO:0031640">
    <property type="term" value="P:killing of cells of another organism"/>
    <property type="evidence" value="ECO:0007669"/>
    <property type="project" value="UniProtKB-KW"/>
</dbReference>
<reference key="1">
    <citation type="journal article" date="2013" name="Toxicon">
        <title>Characterization of the venom from the Australian scorpion Urodacus yaschenkoi: molecular mass analysis of components, cDNA sequences and peptides with antimicrobial activity.</title>
        <authorList>
            <person name="Luna-Ramirez K."/>
            <person name="Quintero-Hernandez V."/>
            <person name="Vargas-Jaimes L."/>
            <person name="Batista C.V."/>
            <person name="Winkel K.D."/>
            <person name="Possani L.D."/>
        </authorList>
    </citation>
    <scope>NUCLEOTIDE SEQUENCE [MRNA]</scope>
    <scope>SYNTHESIS OF 24-36</scope>
    <scope>FUNCTION</scope>
    <scope>MASS SPECTROMETRY</scope>
    <scope>AMIDATION AT PHE-36</scope>
    <source>
        <tissue>Venom</tissue>
        <tissue>Venom gland</tissue>
    </source>
</reference>
<reference key="2">
    <citation type="journal article" date="2013" name="Peptides">
        <title>Three new antimicrobial peptides from the scorpion Pandinus imperator.</title>
        <authorList>
            <person name="Zeng X.C."/>
            <person name="Zhou L."/>
            <person name="Shi W."/>
            <person name="Luo X."/>
            <person name="Zhang L."/>
            <person name="Nie Y."/>
            <person name="Wang J."/>
            <person name="Wu S."/>
            <person name="Cao B."/>
            <person name="Cao H."/>
        </authorList>
    </citation>
    <scope>NOMENCLATURE</scope>
</reference>
<reference key="3">
    <citation type="journal article" date="2014" name="Peptides">
        <title>Scorpion venom peptides with no disulfide bridges: a review.</title>
        <authorList>
            <person name="Almaaytah A."/>
            <person name="Albalas Q."/>
        </authorList>
    </citation>
    <scope>NOMENCLATURE</scope>
</reference>
<comment type="function">
    <text evidence="3">Antimicrobial peptide that inhibits the growth of Gram-positive (S.aureus, MIC=10 uM) and Gram-negative bacteria (E.coli, MIC=15 uM and P.aeruginosa, MIC=6 uM). It also shows 35% of hemolysis when 15 uM are tested (95% at 50 uM).</text>
</comment>
<comment type="subcellular location">
    <subcellularLocation>
        <location evidence="1">Secreted</location>
    </subcellularLocation>
    <subcellularLocation>
        <location evidence="1">Target cell membrane</location>
    </subcellularLocation>
    <text evidence="1">Forms a helical membrane channel in the prey.</text>
</comment>
<comment type="tissue specificity">
    <text>Expressed by the venom gland.</text>
</comment>
<comment type="PTM">
    <text evidence="3">The non-amidated UyCT3 does not show antimicrobial activity.</text>
</comment>
<comment type="mass spectrometry">
    <text>Average mass.</text>
</comment>
<comment type="similarity">
    <text evidence="7">Belongs to the non-disulfide-bridged peptide (NDBP) superfamily. Short antimicrobial peptide (group 4) family.</text>
</comment>